<sequence>MAEYGTLLQDLTNNITLEDLEQLKSACKEDIPSEKSEEITTGSAWFSFLESHNKLDKDNLSYIEHIFEISRRPDLLTMVVDYRTRVLKISEEDELDTKLTRIPSAKKYKDIIRQPSEEEIIKLAPPPKKA</sequence>
<organism>
    <name type="scientific">Homo sapiens</name>
    <name type="common">Human</name>
    <dbReference type="NCBI Taxonomy" id="9606"/>
    <lineage>
        <taxon>Eukaryota</taxon>
        <taxon>Metazoa</taxon>
        <taxon>Chordata</taxon>
        <taxon>Craniata</taxon>
        <taxon>Vertebrata</taxon>
        <taxon>Euteleostomi</taxon>
        <taxon>Mammalia</taxon>
        <taxon>Eutheria</taxon>
        <taxon>Euarchontoglires</taxon>
        <taxon>Primates</taxon>
        <taxon>Haplorrhini</taxon>
        <taxon>Catarrhini</taxon>
        <taxon>Hominidae</taxon>
        <taxon>Homo</taxon>
    </lineage>
</organism>
<evidence type="ECO:0000250" key="1"/>
<evidence type="ECO:0000250" key="2">
    <source>
        <dbReference type="UniProtKB" id="Q62048"/>
    </source>
</evidence>
<evidence type="ECO:0000255" key="3"/>
<evidence type="ECO:0000255" key="4">
    <source>
        <dbReference type="PROSITE-ProRule" id="PRU00065"/>
    </source>
</evidence>
<evidence type="ECO:0000269" key="5">
    <source>
    </source>
</evidence>
<evidence type="ECO:0000269" key="6">
    <source>
    </source>
</evidence>
<evidence type="ECO:0000303" key="7">
    <source>
    </source>
</evidence>
<evidence type="ECO:0000305" key="8"/>
<evidence type="ECO:0007744" key="9">
    <source>
    </source>
</evidence>
<evidence type="ECO:0007744" key="10">
    <source>
    </source>
</evidence>
<evidence type="ECO:0007744" key="11">
    <source>
    </source>
</evidence>
<evidence type="ECO:0007744" key="12">
    <source>
    </source>
</evidence>
<evidence type="ECO:0007744" key="13">
    <source>
    </source>
</evidence>
<evidence type="ECO:0007829" key="14">
    <source>
        <dbReference type="PDB" id="4IZA"/>
    </source>
</evidence>
<dbReference type="EMBL" id="X86809">
    <property type="protein sequence ID" value="CAA60499.1"/>
    <property type="molecule type" value="mRNA"/>
</dbReference>
<dbReference type="EMBL" id="Y13736">
    <property type="protein sequence ID" value="CAA74076.1"/>
    <property type="molecule type" value="mRNA"/>
</dbReference>
<dbReference type="EMBL" id="AF153274">
    <property type="protein sequence ID" value="AAD56775.1"/>
    <property type="molecule type" value="Genomic_DNA"/>
</dbReference>
<dbReference type="EMBL" id="AF153273">
    <property type="protein sequence ID" value="AAD56775.1"/>
    <property type="status" value="JOINED"/>
    <property type="molecule type" value="Genomic_DNA"/>
</dbReference>
<dbReference type="EMBL" id="AK095879">
    <property type="protein sequence ID" value="BAG53155.1"/>
    <property type="molecule type" value="mRNA"/>
</dbReference>
<dbReference type="EMBL" id="AL121987">
    <property type="status" value="NOT_ANNOTATED_CDS"/>
    <property type="molecule type" value="Genomic_DNA"/>
</dbReference>
<dbReference type="EMBL" id="AL139011">
    <property type="status" value="NOT_ANNOTATED_CDS"/>
    <property type="molecule type" value="Genomic_DNA"/>
</dbReference>
<dbReference type="EMBL" id="CH471121">
    <property type="protein sequence ID" value="EAW52735.1"/>
    <property type="molecule type" value="Genomic_DNA"/>
</dbReference>
<dbReference type="EMBL" id="BC002426">
    <property type="protein sequence ID" value="AAH02426.1"/>
    <property type="molecule type" value="mRNA"/>
</dbReference>
<dbReference type="EMBL" id="BC022554">
    <property type="protein sequence ID" value="AAH22554.1"/>
    <property type="molecule type" value="mRNA"/>
</dbReference>
<dbReference type="EMBL" id="BT007252">
    <property type="protein sequence ID" value="AAP35916.1"/>
    <property type="molecule type" value="mRNA"/>
</dbReference>
<dbReference type="CCDS" id="CCDS1199.1">
    <molecule id="Q15121-1"/>
</dbReference>
<dbReference type="CCDS" id="CCDS72954.1">
    <molecule id="Q15121-2"/>
</dbReference>
<dbReference type="PIR" id="S55384">
    <property type="entry name" value="S55384"/>
</dbReference>
<dbReference type="RefSeq" id="NP_001284505.1">
    <molecule id="Q15121-2"/>
    <property type="nucleotide sequence ID" value="NM_001297576.2"/>
</dbReference>
<dbReference type="RefSeq" id="NP_001284506.1">
    <molecule id="Q15121-1"/>
    <property type="nucleotide sequence ID" value="NM_001297577.2"/>
</dbReference>
<dbReference type="RefSeq" id="NP_001284507.1">
    <property type="nucleotide sequence ID" value="NM_001297578.1"/>
</dbReference>
<dbReference type="RefSeq" id="NP_003759.1">
    <molecule id="Q15121-1"/>
    <property type="nucleotide sequence ID" value="NM_003768.5"/>
</dbReference>
<dbReference type="RefSeq" id="XP_006711662.1">
    <property type="nucleotide sequence ID" value="XM_006711599.2"/>
</dbReference>
<dbReference type="RefSeq" id="XP_047289347.1">
    <molecule id="Q15121-2"/>
    <property type="nucleotide sequence ID" value="XM_047433391.1"/>
</dbReference>
<dbReference type="RefSeq" id="XP_054195371.1">
    <molecule id="Q15121-2"/>
    <property type="nucleotide sequence ID" value="XM_054339396.1"/>
</dbReference>
<dbReference type="PDB" id="4IZ5">
    <property type="method" value="X-ray"/>
    <property type="resolution" value="3.19 A"/>
    <property type="chains" value="E/F/G/H=1-130"/>
</dbReference>
<dbReference type="PDB" id="4IZA">
    <property type="method" value="X-ray"/>
    <property type="resolution" value="1.93 A"/>
    <property type="chains" value="B=1-96"/>
</dbReference>
<dbReference type="PDB" id="6P6B">
    <property type="method" value="NMR"/>
    <property type="chains" value="A=1-90"/>
</dbReference>
<dbReference type="PDB" id="6P6C">
    <property type="method" value="NMR"/>
    <property type="chains" value="A=1-130"/>
</dbReference>
<dbReference type="PDBsum" id="4IZ5"/>
<dbReference type="PDBsum" id="4IZA"/>
<dbReference type="PDBsum" id="6P6B"/>
<dbReference type="PDBsum" id="6P6C"/>
<dbReference type="BMRB" id="Q15121"/>
<dbReference type="SMR" id="Q15121"/>
<dbReference type="BioGRID" id="114230">
    <property type="interactions" value="86"/>
</dbReference>
<dbReference type="FunCoup" id="Q15121">
    <property type="interactions" value="1453"/>
</dbReference>
<dbReference type="IntAct" id="Q15121">
    <property type="interactions" value="49"/>
</dbReference>
<dbReference type="MINT" id="Q15121"/>
<dbReference type="STRING" id="9606.ENSP00000357055"/>
<dbReference type="iPTMnet" id="Q15121"/>
<dbReference type="MetOSite" id="Q15121"/>
<dbReference type="PhosphoSitePlus" id="Q15121"/>
<dbReference type="BioMuta" id="PEA15"/>
<dbReference type="DMDM" id="32470612"/>
<dbReference type="jPOST" id="Q15121"/>
<dbReference type="MassIVE" id="Q15121"/>
<dbReference type="PaxDb" id="9606-ENSP00000357055"/>
<dbReference type="PeptideAtlas" id="Q15121"/>
<dbReference type="ProteomicsDB" id="60449">
    <molecule id="Q15121-1"/>
</dbReference>
<dbReference type="Pumba" id="Q15121"/>
<dbReference type="TopDownProteomics" id="Q15121-1">
    <molecule id="Q15121-1"/>
</dbReference>
<dbReference type="Antibodypedia" id="20486">
    <property type="antibodies" value="492 antibodies from 36 providers"/>
</dbReference>
<dbReference type="DNASU" id="8682"/>
<dbReference type="Ensembl" id="ENST00000360472.9">
    <molecule id="Q15121-1"/>
    <property type="protein sequence ID" value="ENSP00000353660.5"/>
    <property type="gene ID" value="ENSG00000162734.13"/>
</dbReference>
<dbReference type="Ensembl" id="ENST00000368076.1">
    <molecule id="Q15121-2"/>
    <property type="protein sequence ID" value="ENSP00000357055.1"/>
    <property type="gene ID" value="ENSG00000162734.13"/>
</dbReference>
<dbReference type="GeneID" id="8682"/>
<dbReference type="KEGG" id="hsa:8682"/>
<dbReference type="MANE-Select" id="ENST00000360472.9">
    <property type="protein sequence ID" value="ENSP00000353660.5"/>
    <property type="RefSeq nucleotide sequence ID" value="NM_003768.5"/>
    <property type="RefSeq protein sequence ID" value="NP_003759.1"/>
</dbReference>
<dbReference type="UCSC" id="uc001fvk.4">
    <molecule id="Q15121-1"/>
    <property type="organism name" value="human"/>
</dbReference>
<dbReference type="AGR" id="HGNC:8822"/>
<dbReference type="CTD" id="8682"/>
<dbReference type="DisGeNET" id="8682"/>
<dbReference type="GeneCards" id="PEA15"/>
<dbReference type="HGNC" id="HGNC:8822">
    <property type="gene designation" value="PEA15"/>
</dbReference>
<dbReference type="HPA" id="ENSG00000162734">
    <property type="expression patterns" value="Tissue enriched (brain)"/>
</dbReference>
<dbReference type="MIM" id="603434">
    <property type="type" value="gene"/>
</dbReference>
<dbReference type="neXtProt" id="NX_Q15121"/>
<dbReference type="OpenTargets" id="ENSG00000162734"/>
<dbReference type="PharmGKB" id="PA33166"/>
<dbReference type="VEuPathDB" id="HostDB:ENSG00000162734"/>
<dbReference type="eggNOG" id="KOG3573">
    <property type="taxonomic scope" value="Eukaryota"/>
</dbReference>
<dbReference type="GeneTree" id="ENSGT00390000000230"/>
<dbReference type="InParanoid" id="Q15121"/>
<dbReference type="OMA" id="ATSKDWF"/>
<dbReference type="OrthoDB" id="9931131at2759"/>
<dbReference type="PAN-GO" id="Q15121">
    <property type="GO annotations" value="1 GO annotation based on evolutionary models"/>
</dbReference>
<dbReference type="PhylomeDB" id="Q15121"/>
<dbReference type="TreeFam" id="TF332405"/>
<dbReference type="PathwayCommons" id="Q15121"/>
<dbReference type="Reactome" id="R-HSA-112409">
    <property type="pathway name" value="RAF-independent MAPK1/3 activation"/>
</dbReference>
<dbReference type="Reactome" id="R-HSA-5673001">
    <property type="pathway name" value="RAF/MAP kinase cascade"/>
</dbReference>
<dbReference type="SignaLink" id="Q15121"/>
<dbReference type="SIGNOR" id="Q15121"/>
<dbReference type="BioGRID-ORCS" id="8682">
    <property type="hits" value="29 hits in 1161 CRISPR screens"/>
</dbReference>
<dbReference type="CD-CODE" id="FB4E32DD">
    <property type="entry name" value="Presynaptic clusters and postsynaptic densities"/>
</dbReference>
<dbReference type="ChiTaRS" id="PEA15">
    <property type="organism name" value="human"/>
</dbReference>
<dbReference type="EvolutionaryTrace" id="Q15121"/>
<dbReference type="GeneWiki" id="PEA15"/>
<dbReference type="GenomeRNAi" id="8682"/>
<dbReference type="Pharos" id="Q15121">
    <property type="development level" value="Tbio"/>
</dbReference>
<dbReference type="PRO" id="PR:Q15121"/>
<dbReference type="Proteomes" id="UP000005640">
    <property type="component" value="Chromosome 1"/>
</dbReference>
<dbReference type="RNAct" id="Q15121">
    <property type="molecule type" value="protein"/>
</dbReference>
<dbReference type="Bgee" id="ENSG00000162734">
    <property type="expression patterns" value="Expressed in dorsal motor nucleus of vagus nerve and 211 other cell types or tissues"/>
</dbReference>
<dbReference type="ExpressionAtlas" id="Q15121">
    <property type="expression patterns" value="baseline and differential"/>
</dbReference>
<dbReference type="GO" id="GO:0005829">
    <property type="term" value="C:cytosol"/>
    <property type="evidence" value="ECO:0000314"/>
    <property type="project" value="HPA"/>
</dbReference>
<dbReference type="GO" id="GO:0043231">
    <property type="term" value="C:intracellular membrane-bounded organelle"/>
    <property type="evidence" value="ECO:0000314"/>
    <property type="project" value="HPA"/>
</dbReference>
<dbReference type="GO" id="GO:0005875">
    <property type="term" value="C:microtubule associated complex"/>
    <property type="evidence" value="ECO:0000303"/>
    <property type="project" value="UniProtKB"/>
</dbReference>
<dbReference type="GO" id="GO:0005654">
    <property type="term" value="C:nucleoplasm"/>
    <property type="evidence" value="ECO:0000314"/>
    <property type="project" value="HPA"/>
</dbReference>
<dbReference type="GO" id="GO:0006915">
    <property type="term" value="P:apoptotic process"/>
    <property type="evidence" value="ECO:0007669"/>
    <property type="project" value="UniProtKB-KW"/>
</dbReference>
<dbReference type="GO" id="GO:0000165">
    <property type="term" value="P:MAPK cascade"/>
    <property type="evidence" value="ECO:0007669"/>
    <property type="project" value="InterPro"/>
</dbReference>
<dbReference type="GO" id="GO:0046325">
    <property type="term" value="P:negative regulation of D-glucose import"/>
    <property type="evidence" value="ECO:0000314"/>
    <property type="project" value="UniProtKB"/>
</dbReference>
<dbReference type="GO" id="GO:1902042">
    <property type="term" value="P:negative regulation of extrinsic apoptotic signaling pathway via death domain receptors"/>
    <property type="evidence" value="ECO:0000314"/>
    <property type="project" value="UniProtKB"/>
</dbReference>
<dbReference type="GO" id="GO:1902043">
    <property type="term" value="P:positive regulation of extrinsic apoptotic signaling pathway via death domain receptors"/>
    <property type="evidence" value="ECO:0007669"/>
    <property type="project" value="Ensembl"/>
</dbReference>
<dbReference type="CDD" id="cd08338">
    <property type="entry name" value="DED_PEA15"/>
    <property type="match status" value="1"/>
</dbReference>
<dbReference type="FunFam" id="1.10.533.10:FF:000026">
    <property type="entry name" value="astrocytic phosphoprotein PEA-15 isoform X1"/>
    <property type="match status" value="1"/>
</dbReference>
<dbReference type="Gene3D" id="1.10.533.10">
    <property type="entry name" value="Death Domain, Fas"/>
    <property type="match status" value="1"/>
</dbReference>
<dbReference type="InterPro" id="IPR011029">
    <property type="entry name" value="DEATH-like_dom_sf"/>
</dbReference>
<dbReference type="InterPro" id="IPR001875">
    <property type="entry name" value="DED_dom"/>
</dbReference>
<dbReference type="InterPro" id="IPR029546">
    <property type="entry name" value="PEA15_DED"/>
</dbReference>
<dbReference type="PANTHER" id="PTHR48169:SF1">
    <property type="entry name" value="ASTROCYTIC PHOSPHOPROTEIN PEA-15"/>
    <property type="match status" value="1"/>
</dbReference>
<dbReference type="PANTHER" id="PTHR48169">
    <property type="entry name" value="DED DOMAIN-CONTAINING PROTEIN"/>
    <property type="match status" value="1"/>
</dbReference>
<dbReference type="Pfam" id="PF01335">
    <property type="entry name" value="DED"/>
    <property type="match status" value="1"/>
</dbReference>
<dbReference type="SMART" id="SM00031">
    <property type="entry name" value="DED"/>
    <property type="match status" value="1"/>
</dbReference>
<dbReference type="SUPFAM" id="SSF47986">
    <property type="entry name" value="DEATH domain"/>
    <property type="match status" value="1"/>
</dbReference>
<dbReference type="PROSITE" id="PS50168">
    <property type="entry name" value="DED"/>
    <property type="match status" value="1"/>
</dbReference>
<reference key="1">
    <citation type="journal article" date="1996" name="J. Biol. Chem.">
        <title>The major astrocytic phosphoprotein PEA-15 is encoded by two mRNAs conserved on their full length in mouse and human.</title>
        <authorList>
            <person name="Estelles A."/>
            <person name="Yokoyama M."/>
            <person name="Nothias F."/>
            <person name="Vincent J.-D."/>
            <person name="Glowinski J."/>
            <person name="Vernier P."/>
            <person name="Chneiweiss H."/>
        </authorList>
    </citation>
    <scope>NUCLEOTIDE SEQUENCE [MRNA] (ISOFORM 1)</scope>
    <source>
        <tissue>Brain</tissue>
    </source>
</reference>
<reference key="2">
    <citation type="journal article" date="1998" name="EMBO J.">
        <title>PED/PEA-15 gene controls glucose transport and is overexpressed in type 2 diabetes mellitus.</title>
        <authorList>
            <person name="Condorelli G."/>
            <person name="Vigliotta G."/>
            <person name="Iavarone C."/>
            <person name="Caruso M."/>
            <person name="Tocchetti C.G."/>
            <person name="Andreozzi F."/>
            <person name="Cafieri A."/>
            <person name="Tecce M.F."/>
            <person name="Formisano P."/>
            <person name="Beguinot L."/>
            <person name="Beguinot F."/>
        </authorList>
    </citation>
    <scope>NUCLEOTIDE SEQUENCE [MRNA] (ISOFORM 1)</scope>
    <scope>FUNCTION</scope>
    <scope>TISSUE SPECIFICITY</scope>
    <source>
        <tissue>Heart</tissue>
    </source>
</reference>
<reference key="3">
    <citation type="journal article" date="2000" name="Gene">
        <title>Molecular characterization of the human PEA15 gene on 1q21-q22 and association with type 2 diabetes mellitus in Pima Indians.</title>
        <authorList>
            <person name="Wolford J.K."/>
            <person name="Bogardus C."/>
            <person name="Ossowski V."/>
            <person name="Prochazka M."/>
        </authorList>
    </citation>
    <scope>NUCLEOTIDE SEQUENCE [GENOMIC DNA]</scope>
</reference>
<reference key="4">
    <citation type="submission" date="2005-09" db="EMBL/GenBank/DDBJ databases">
        <authorList>
            <person name="Mural R.J."/>
            <person name="Istrail S."/>
            <person name="Sutton G."/>
            <person name="Florea L."/>
            <person name="Halpern A.L."/>
            <person name="Mobarry C.M."/>
            <person name="Lippert R."/>
            <person name="Walenz B."/>
            <person name="Shatkay H."/>
            <person name="Dew I."/>
            <person name="Miller J.R."/>
            <person name="Flanigan M.J."/>
            <person name="Edwards N.J."/>
            <person name="Bolanos R."/>
            <person name="Fasulo D."/>
            <person name="Halldorsson B.V."/>
            <person name="Hannenhalli S."/>
            <person name="Turner R."/>
            <person name="Yooseph S."/>
            <person name="Lu F."/>
            <person name="Nusskern D.R."/>
            <person name="Shue B.C."/>
            <person name="Zheng X.H."/>
            <person name="Zhong F."/>
            <person name="Delcher A.L."/>
            <person name="Huson D.H."/>
            <person name="Kravitz S.A."/>
            <person name="Mouchard L."/>
            <person name="Reinert K."/>
            <person name="Remington K.A."/>
            <person name="Clark A.G."/>
            <person name="Waterman M.S."/>
            <person name="Eichler E.E."/>
            <person name="Adams M.D."/>
            <person name="Hunkapiller M.W."/>
            <person name="Myers E.W."/>
            <person name="Venter J.C."/>
        </authorList>
    </citation>
    <scope>NUCLEOTIDE SEQUENCE [LARGE SCALE GENOMIC DNA]</scope>
</reference>
<reference key="5">
    <citation type="submission" date="2003-05" db="EMBL/GenBank/DDBJ databases">
        <title>Cloning of human full-length CDSs in BD Creator(TM) system donor vector.</title>
        <authorList>
            <person name="Kalnine N."/>
            <person name="Chen X."/>
            <person name="Rolfs A."/>
            <person name="Halleck A."/>
            <person name="Hines L."/>
            <person name="Eisenstein S."/>
            <person name="Koundinya M."/>
            <person name="Raphael J."/>
            <person name="Moreira D."/>
            <person name="Kelley T."/>
            <person name="LaBaer J."/>
            <person name="Lin Y."/>
            <person name="Phelan M."/>
            <person name="Farmer A."/>
        </authorList>
    </citation>
    <scope>NUCLEOTIDE SEQUENCE [LARGE SCALE MRNA] (ISOFORM 1)</scope>
</reference>
<reference key="6">
    <citation type="journal article" date="2004" name="Nat. Genet.">
        <title>Complete sequencing and characterization of 21,243 full-length human cDNAs.</title>
        <authorList>
            <person name="Ota T."/>
            <person name="Suzuki Y."/>
            <person name="Nishikawa T."/>
            <person name="Otsuki T."/>
            <person name="Sugiyama T."/>
            <person name="Irie R."/>
            <person name="Wakamatsu A."/>
            <person name="Hayashi K."/>
            <person name="Sato H."/>
            <person name="Nagai K."/>
            <person name="Kimura K."/>
            <person name="Makita H."/>
            <person name="Sekine M."/>
            <person name="Obayashi M."/>
            <person name="Nishi T."/>
            <person name="Shibahara T."/>
            <person name="Tanaka T."/>
            <person name="Ishii S."/>
            <person name="Yamamoto J."/>
            <person name="Saito K."/>
            <person name="Kawai Y."/>
            <person name="Isono Y."/>
            <person name="Nakamura Y."/>
            <person name="Nagahari K."/>
            <person name="Murakami K."/>
            <person name="Yasuda T."/>
            <person name="Iwayanagi T."/>
            <person name="Wagatsuma M."/>
            <person name="Shiratori A."/>
            <person name="Sudo H."/>
            <person name="Hosoiri T."/>
            <person name="Kaku Y."/>
            <person name="Kodaira H."/>
            <person name="Kondo H."/>
            <person name="Sugawara M."/>
            <person name="Takahashi M."/>
            <person name="Kanda K."/>
            <person name="Yokoi T."/>
            <person name="Furuya T."/>
            <person name="Kikkawa E."/>
            <person name="Omura Y."/>
            <person name="Abe K."/>
            <person name="Kamihara K."/>
            <person name="Katsuta N."/>
            <person name="Sato K."/>
            <person name="Tanikawa M."/>
            <person name="Yamazaki M."/>
            <person name="Ninomiya K."/>
            <person name="Ishibashi T."/>
            <person name="Yamashita H."/>
            <person name="Murakawa K."/>
            <person name="Fujimori K."/>
            <person name="Tanai H."/>
            <person name="Kimata M."/>
            <person name="Watanabe M."/>
            <person name="Hiraoka S."/>
            <person name="Chiba Y."/>
            <person name="Ishida S."/>
            <person name="Ono Y."/>
            <person name="Takiguchi S."/>
            <person name="Watanabe S."/>
            <person name="Yosida M."/>
            <person name="Hotuta T."/>
            <person name="Kusano J."/>
            <person name="Kanehori K."/>
            <person name="Takahashi-Fujii A."/>
            <person name="Hara H."/>
            <person name="Tanase T.-O."/>
            <person name="Nomura Y."/>
            <person name="Togiya S."/>
            <person name="Komai F."/>
            <person name="Hara R."/>
            <person name="Takeuchi K."/>
            <person name="Arita M."/>
            <person name="Imose N."/>
            <person name="Musashino K."/>
            <person name="Yuuki H."/>
            <person name="Oshima A."/>
            <person name="Sasaki N."/>
            <person name="Aotsuka S."/>
            <person name="Yoshikawa Y."/>
            <person name="Matsunawa H."/>
            <person name="Ichihara T."/>
            <person name="Shiohata N."/>
            <person name="Sano S."/>
            <person name="Moriya S."/>
            <person name="Momiyama H."/>
            <person name="Satoh N."/>
            <person name="Takami S."/>
            <person name="Terashima Y."/>
            <person name="Suzuki O."/>
            <person name="Nakagawa S."/>
            <person name="Senoh A."/>
            <person name="Mizoguchi H."/>
            <person name="Goto Y."/>
            <person name="Shimizu F."/>
            <person name="Wakebe H."/>
            <person name="Hishigaki H."/>
            <person name="Watanabe T."/>
            <person name="Sugiyama A."/>
            <person name="Takemoto M."/>
            <person name="Kawakami B."/>
            <person name="Yamazaki M."/>
            <person name="Watanabe K."/>
            <person name="Kumagai A."/>
            <person name="Itakura S."/>
            <person name="Fukuzumi Y."/>
            <person name="Fujimori Y."/>
            <person name="Komiyama M."/>
            <person name="Tashiro H."/>
            <person name="Tanigami A."/>
            <person name="Fujiwara T."/>
            <person name="Ono T."/>
            <person name="Yamada K."/>
            <person name="Fujii Y."/>
            <person name="Ozaki K."/>
            <person name="Hirao M."/>
            <person name="Ohmori Y."/>
            <person name="Kawabata A."/>
            <person name="Hikiji T."/>
            <person name="Kobatake N."/>
            <person name="Inagaki H."/>
            <person name="Ikema Y."/>
            <person name="Okamoto S."/>
            <person name="Okitani R."/>
            <person name="Kawakami T."/>
            <person name="Noguchi S."/>
            <person name="Itoh T."/>
            <person name="Shigeta K."/>
            <person name="Senba T."/>
            <person name="Matsumura K."/>
            <person name="Nakajima Y."/>
            <person name="Mizuno T."/>
            <person name="Morinaga M."/>
            <person name="Sasaki M."/>
            <person name="Togashi T."/>
            <person name="Oyama M."/>
            <person name="Hata H."/>
            <person name="Watanabe M."/>
            <person name="Komatsu T."/>
            <person name="Mizushima-Sugano J."/>
            <person name="Satoh T."/>
            <person name="Shirai Y."/>
            <person name="Takahashi Y."/>
            <person name="Nakagawa K."/>
            <person name="Okumura K."/>
            <person name="Nagase T."/>
            <person name="Nomura N."/>
            <person name="Kikuchi H."/>
            <person name="Masuho Y."/>
            <person name="Yamashita R."/>
            <person name="Nakai K."/>
            <person name="Yada T."/>
            <person name="Nakamura Y."/>
            <person name="Ohara O."/>
            <person name="Isogai T."/>
            <person name="Sugano S."/>
        </authorList>
    </citation>
    <scope>NUCLEOTIDE SEQUENCE [LARGE SCALE MRNA] (ISOFORM 2)</scope>
</reference>
<reference key="7">
    <citation type="journal article" date="2006" name="Nature">
        <title>The DNA sequence and biological annotation of human chromosome 1.</title>
        <authorList>
            <person name="Gregory S.G."/>
            <person name="Barlow K.F."/>
            <person name="McLay K.E."/>
            <person name="Kaul R."/>
            <person name="Swarbreck D."/>
            <person name="Dunham A."/>
            <person name="Scott C.E."/>
            <person name="Howe K.L."/>
            <person name="Woodfine K."/>
            <person name="Spencer C.C.A."/>
            <person name="Jones M.C."/>
            <person name="Gillson C."/>
            <person name="Searle S."/>
            <person name="Zhou Y."/>
            <person name="Kokocinski F."/>
            <person name="McDonald L."/>
            <person name="Evans R."/>
            <person name="Phillips K."/>
            <person name="Atkinson A."/>
            <person name="Cooper R."/>
            <person name="Jones C."/>
            <person name="Hall R.E."/>
            <person name="Andrews T.D."/>
            <person name="Lloyd C."/>
            <person name="Ainscough R."/>
            <person name="Almeida J.P."/>
            <person name="Ambrose K.D."/>
            <person name="Anderson F."/>
            <person name="Andrew R.W."/>
            <person name="Ashwell R.I.S."/>
            <person name="Aubin K."/>
            <person name="Babbage A.K."/>
            <person name="Bagguley C.L."/>
            <person name="Bailey J."/>
            <person name="Beasley H."/>
            <person name="Bethel G."/>
            <person name="Bird C.P."/>
            <person name="Bray-Allen S."/>
            <person name="Brown J.Y."/>
            <person name="Brown A.J."/>
            <person name="Buckley D."/>
            <person name="Burton J."/>
            <person name="Bye J."/>
            <person name="Carder C."/>
            <person name="Chapman J.C."/>
            <person name="Clark S.Y."/>
            <person name="Clarke G."/>
            <person name="Clee C."/>
            <person name="Cobley V."/>
            <person name="Collier R.E."/>
            <person name="Corby N."/>
            <person name="Coville G.J."/>
            <person name="Davies J."/>
            <person name="Deadman R."/>
            <person name="Dunn M."/>
            <person name="Earthrowl M."/>
            <person name="Ellington A.G."/>
            <person name="Errington H."/>
            <person name="Frankish A."/>
            <person name="Frankland J."/>
            <person name="French L."/>
            <person name="Garner P."/>
            <person name="Garnett J."/>
            <person name="Gay L."/>
            <person name="Ghori M.R.J."/>
            <person name="Gibson R."/>
            <person name="Gilby L.M."/>
            <person name="Gillett W."/>
            <person name="Glithero R.J."/>
            <person name="Grafham D.V."/>
            <person name="Griffiths C."/>
            <person name="Griffiths-Jones S."/>
            <person name="Grocock R."/>
            <person name="Hammond S."/>
            <person name="Harrison E.S.I."/>
            <person name="Hart E."/>
            <person name="Haugen E."/>
            <person name="Heath P.D."/>
            <person name="Holmes S."/>
            <person name="Holt K."/>
            <person name="Howden P.J."/>
            <person name="Hunt A.R."/>
            <person name="Hunt S.E."/>
            <person name="Hunter G."/>
            <person name="Isherwood J."/>
            <person name="James R."/>
            <person name="Johnson C."/>
            <person name="Johnson D."/>
            <person name="Joy A."/>
            <person name="Kay M."/>
            <person name="Kershaw J.K."/>
            <person name="Kibukawa M."/>
            <person name="Kimberley A.M."/>
            <person name="King A."/>
            <person name="Knights A.J."/>
            <person name="Lad H."/>
            <person name="Laird G."/>
            <person name="Lawlor S."/>
            <person name="Leongamornlert D.A."/>
            <person name="Lloyd D.M."/>
            <person name="Loveland J."/>
            <person name="Lovell J."/>
            <person name="Lush M.J."/>
            <person name="Lyne R."/>
            <person name="Martin S."/>
            <person name="Mashreghi-Mohammadi M."/>
            <person name="Matthews L."/>
            <person name="Matthews N.S.W."/>
            <person name="McLaren S."/>
            <person name="Milne S."/>
            <person name="Mistry S."/>
            <person name="Moore M.J.F."/>
            <person name="Nickerson T."/>
            <person name="O'Dell C.N."/>
            <person name="Oliver K."/>
            <person name="Palmeiri A."/>
            <person name="Palmer S.A."/>
            <person name="Parker A."/>
            <person name="Patel D."/>
            <person name="Pearce A.V."/>
            <person name="Peck A.I."/>
            <person name="Pelan S."/>
            <person name="Phelps K."/>
            <person name="Phillimore B.J."/>
            <person name="Plumb R."/>
            <person name="Rajan J."/>
            <person name="Raymond C."/>
            <person name="Rouse G."/>
            <person name="Saenphimmachak C."/>
            <person name="Sehra H.K."/>
            <person name="Sheridan E."/>
            <person name="Shownkeen R."/>
            <person name="Sims S."/>
            <person name="Skuce C.D."/>
            <person name="Smith M."/>
            <person name="Steward C."/>
            <person name="Subramanian S."/>
            <person name="Sycamore N."/>
            <person name="Tracey A."/>
            <person name="Tromans A."/>
            <person name="Van Helmond Z."/>
            <person name="Wall M."/>
            <person name="Wallis J.M."/>
            <person name="White S."/>
            <person name="Whitehead S.L."/>
            <person name="Wilkinson J.E."/>
            <person name="Willey D.L."/>
            <person name="Williams H."/>
            <person name="Wilming L."/>
            <person name="Wray P.W."/>
            <person name="Wu Z."/>
            <person name="Coulson A."/>
            <person name="Vaudin M."/>
            <person name="Sulston J.E."/>
            <person name="Durbin R.M."/>
            <person name="Hubbard T."/>
            <person name="Wooster R."/>
            <person name="Dunham I."/>
            <person name="Carter N.P."/>
            <person name="McVean G."/>
            <person name="Ross M.T."/>
            <person name="Harrow J."/>
            <person name="Olson M.V."/>
            <person name="Beck S."/>
            <person name="Rogers J."/>
            <person name="Bentley D.R."/>
        </authorList>
    </citation>
    <scope>NUCLEOTIDE SEQUENCE [LARGE SCALE GENOMIC DNA]</scope>
</reference>
<reference key="8">
    <citation type="journal article" date="2004" name="Genome Res.">
        <title>The status, quality, and expansion of the NIH full-length cDNA project: the Mammalian Gene Collection (MGC).</title>
        <authorList>
            <consortium name="The MGC Project Team"/>
        </authorList>
    </citation>
    <scope>NUCLEOTIDE SEQUENCE [LARGE SCALE MRNA] (ISOFORM 1)</scope>
    <source>
        <tissue>Brain</tissue>
        <tissue>Skin</tissue>
    </source>
</reference>
<reference key="9">
    <citation type="submission" date="2008-12" db="UniProtKB">
        <authorList>
            <person name="Lubec G."/>
            <person name="Chen W.-Q."/>
            <person name="Sun Y."/>
        </authorList>
    </citation>
    <scope>PROTEIN SEQUENCE OF 55-83 AND 89-98</scope>
    <scope>IDENTIFICATION BY MASS SPECTROMETRY</scope>
    <source>
        <tissue>Fetal brain cortex</tissue>
    </source>
</reference>
<reference key="10">
    <citation type="journal article" date="1999" name="Oncogene">
        <title>PED/PEA-15: an anti-apoptotic molecule that regulates FAS/TNFR1-induced apoptosis.</title>
        <authorList>
            <person name="Condorelli G."/>
            <person name="Vigliotta G."/>
            <person name="Cafieri A."/>
            <person name="Trencia A."/>
            <person name="Andalo P."/>
            <person name="Oriente F."/>
            <person name="Miele C."/>
            <person name="Caruso M."/>
            <person name="Formisano P."/>
            <person name="Beguinot F."/>
        </authorList>
    </citation>
    <scope>FUNCTION</scope>
    <scope>INTERACTION WITH CASP8 AND FADD</scope>
</reference>
<reference key="11">
    <citation type="journal article" date="2006" name="Cell">
        <title>Global, in vivo, and site-specific phosphorylation dynamics in signaling networks.</title>
        <authorList>
            <person name="Olsen J.V."/>
            <person name="Blagoev B."/>
            <person name="Gnad F."/>
            <person name="Macek B."/>
            <person name="Kumar C."/>
            <person name="Mortensen P."/>
            <person name="Mann M."/>
        </authorList>
    </citation>
    <scope>PHOSPHORYLATION [LARGE SCALE ANALYSIS] AT SER-104 AND SER-116</scope>
    <scope>IDENTIFICATION BY MASS SPECTROMETRY [LARGE SCALE ANALYSIS]</scope>
    <source>
        <tissue>Cervix carcinoma</tissue>
    </source>
</reference>
<reference key="12">
    <citation type="journal article" date="2008" name="Proc. Natl. Acad. Sci. U.S.A.">
        <title>A quantitative atlas of mitotic phosphorylation.</title>
        <authorList>
            <person name="Dephoure N."/>
            <person name="Zhou C."/>
            <person name="Villen J."/>
            <person name="Beausoleil S.A."/>
            <person name="Bakalarski C.E."/>
            <person name="Elledge S.J."/>
            <person name="Gygi S.P."/>
        </authorList>
    </citation>
    <scope>IDENTIFICATION BY MASS SPECTROMETRY [LARGE SCALE ANALYSIS]</scope>
    <source>
        <tissue>Cervix carcinoma</tissue>
    </source>
</reference>
<reference key="13">
    <citation type="journal article" date="2009" name="Anal. Chem.">
        <title>Lys-N and trypsin cover complementary parts of the phosphoproteome in a refined SCX-based approach.</title>
        <authorList>
            <person name="Gauci S."/>
            <person name="Helbig A.O."/>
            <person name="Slijper M."/>
            <person name="Krijgsveld J."/>
            <person name="Heck A.J."/>
            <person name="Mohammed S."/>
        </authorList>
    </citation>
    <scope>IDENTIFICATION BY MASS SPECTROMETRY [LARGE SCALE ANALYSIS]</scope>
</reference>
<reference key="14">
    <citation type="journal article" date="2010" name="Sci. Signal.">
        <title>Quantitative phosphoproteomics reveals widespread full phosphorylation site occupancy during mitosis.</title>
        <authorList>
            <person name="Olsen J.V."/>
            <person name="Vermeulen M."/>
            <person name="Santamaria A."/>
            <person name="Kumar C."/>
            <person name="Miller M.L."/>
            <person name="Jensen L.J."/>
            <person name="Gnad F."/>
            <person name="Cox J."/>
            <person name="Jensen T.S."/>
            <person name="Nigg E.A."/>
            <person name="Brunak S."/>
            <person name="Mann M."/>
        </authorList>
    </citation>
    <scope>PHOSPHORYLATION [LARGE SCALE ANALYSIS] AT SER-61 AND SER-116</scope>
    <scope>IDENTIFICATION BY MASS SPECTROMETRY [LARGE SCALE ANALYSIS]</scope>
    <source>
        <tissue>Cervix carcinoma</tissue>
    </source>
</reference>
<reference key="15">
    <citation type="journal article" date="2011" name="BMC Syst. Biol.">
        <title>Initial characterization of the human central proteome.</title>
        <authorList>
            <person name="Burkard T.R."/>
            <person name="Planyavsky M."/>
            <person name="Kaupe I."/>
            <person name="Breitwieser F.P."/>
            <person name="Buerckstuemmer T."/>
            <person name="Bennett K.L."/>
            <person name="Superti-Furga G."/>
            <person name="Colinge J."/>
        </authorList>
    </citation>
    <scope>IDENTIFICATION BY MASS SPECTROMETRY [LARGE SCALE ANALYSIS]</scope>
</reference>
<reference key="16">
    <citation type="journal article" date="2011" name="Sci. Signal.">
        <title>System-wide temporal characterization of the proteome and phosphoproteome of human embryonic stem cell differentiation.</title>
        <authorList>
            <person name="Rigbolt K.T."/>
            <person name="Prokhorova T.A."/>
            <person name="Akimov V."/>
            <person name="Henningsen J."/>
            <person name="Johansen P.T."/>
            <person name="Kratchmarova I."/>
            <person name="Kassem M."/>
            <person name="Mann M."/>
            <person name="Olsen J.V."/>
            <person name="Blagoev B."/>
        </authorList>
    </citation>
    <scope>PHOSPHORYLATION [LARGE SCALE ANALYSIS] AT SER-104 AND SER-116</scope>
    <scope>IDENTIFICATION BY MASS SPECTROMETRY [LARGE SCALE ANALYSIS]</scope>
</reference>
<reference key="17">
    <citation type="journal article" date="2013" name="J. Proteome Res.">
        <title>Toward a comprehensive characterization of a human cancer cell phosphoproteome.</title>
        <authorList>
            <person name="Zhou H."/>
            <person name="Di Palma S."/>
            <person name="Preisinger C."/>
            <person name="Peng M."/>
            <person name="Polat A.N."/>
            <person name="Heck A.J."/>
            <person name="Mohammed S."/>
        </authorList>
    </citation>
    <scope>PHOSPHORYLATION [LARGE SCALE ANALYSIS] AT SER-104 AND SER-116</scope>
    <scope>IDENTIFICATION BY MASS SPECTROMETRY [LARGE SCALE ANALYSIS]</scope>
    <source>
        <tissue>Cervix carcinoma</tissue>
        <tissue>Erythroleukemia</tissue>
    </source>
</reference>
<reference key="18">
    <citation type="journal article" date="2014" name="J. Proteomics">
        <title>An enzyme assisted RP-RPLC approach for in-depth analysis of human liver phosphoproteome.</title>
        <authorList>
            <person name="Bian Y."/>
            <person name="Song C."/>
            <person name="Cheng K."/>
            <person name="Dong M."/>
            <person name="Wang F."/>
            <person name="Huang J."/>
            <person name="Sun D."/>
            <person name="Wang L."/>
            <person name="Ye M."/>
            <person name="Zou H."/>
        </authorList>
    </citation>
    <scope>PHOSPHORYLATION [LARGE SCALE ANALYSIS] AT SER-116</scope>
    <scope>IDENTIFICATION BY MASS SPECTROMETRY [LARGE SCALE ANALYSIS]</scope>
    <source>
        <tissue>Liver</tissue>
    </source>
</reference>
<accession>Q15121</accession>
<accession>B1AKZ3</accession>
<accession>O00511</accession>
<gene>
    <name type="primary">PEA15</name>
</gene>
<feature type="chain" id="PRO_0000191282" description="Astrocytic phosphoprotein PEA-15">
    <location>
        <begin position="1"/>
        <end position="130"/>
    </location>
</feature>
<feature type="domain" description="DED" evidence="4">
    <location>
        <begin position="3"/>
        <end position="81"/>
    </location>
</feature>
<feature type="region of interest" description="Microtubule-binding" evidence="3">
    <location>
        <begin position="98"/>
        <end position="107"/>
    </location>
</feature>
<feature type="region of interest" description="Microtubule-binding" evidence="3">
    <location>
        <begin position="122"/>
        <end position="129"/>
    </location>
</feature>
<feature type="modified residue" description="Phosphoserine" evidence="10">
    <location>
        <position position="61"/>
    </location>
</feature>
<feature type="modified residue" description="Phosphoserine" evidence="2">
    <location>
        <position position="90"/>
    </location>
</feature>
<feature type="modified residue" description="Phosphoserine" evidence="9 11 12">
    <location>
        <position position="104"/>
    </location>
</feature>
<feature type="modified residue" description="Phosphoserine" evidence="9 10 11 12 13">
    <location>
        <position position="116"/>
    </location>
</feature>
<feature type="splice variant" id="VSP_056174" description="In isoform 2." evidence="7">
    <original>M</original>
    <variation>MEDEGNKLCQAPPWPGQTSPVM</variation>
    <location>
        <position position="1"/>
    </location>
</feature>
<feature type="sequence conflict" description="In Ref. 1; CAA60499." evidence="8" ref="1">
    <original>A</original>
    <variation>V</variation>
    <location>
        <position position="2"/>
    </location>
</feature>
<feature type="sequence conflict" description="In Ref. 1; CAA60499." evidence="8" ref="1">
    <original>L</original>
    <variation>F</variation>
    <location>
        <position position="8"/>
    </location>
</feature>
<feature type="sequence conflict" description="In Ref. 1; CAA60499." evidence="8" ref="1">
    <original>Y</original>
    <variation>I</variation>
    <location>
        <position position="62"/>
    </location>
</feature>
<feature type="sequence conflict" description="In Ref. 1; CAA60499." evidence="8" ref="1">
    <original>A</original>
    <variation>G</variation>
    <location>
        <position position="124"/>
    </location>
</feature>
<feature type="helix" evidence="14">
    <location>
        <begin position="1"/>
        <end position="13"/>
    </location>
</feature>
<feature type="helix" evidence="14">
    <location>
        <begin position="17"/>
        <end position="27"/>
    </location>
</feature>
<feature type="turn" evidence="14">
    <location>
        <begin position="28"/>
        <end position="30"/>
    </location>
</feature>
<feature type="helix" evidence="14">
    <location>
        <begin position="32"/>
        <end position="34"/>
    </location>
</feature>
<feature type="helix" evidence="14">
    <location>
        <begin position="42"/>
        <end position="51"/>
    </location>
</feature>
<feature type="helix" evidence="14">
    <location>
        <begin position="61"/>
        <end position="69"/>
    </location>
</feature>
<feature type="helix" evidence="14">
    <location>
        <begin position="73"/>
        <end position="90"/>
    </location>
</feature>
<keyword id="KW-0002">3D-structure</keyword>
<keyword id="KW-0025">Alternative splicing</keyword>
<keyword id="KW-0053">Apoptosis</keyword>
<keyword id="KW-0963">Cytoplasm</keyword>
<keyword id="KW-0903">Direct protein sequencing</keyword>
<keyword id="KW-0597">Phosphoprotein</keyword>
<keyword id="KW-1267">Proteomics identification</keyword>
<keyword id="KW-1185">Reference proteome</keyword>
<keyword id="KW-0762">Sugar transport</keyword>
<keyword id="KW-0813">Transport</keyword>
<comment type="function">
    <text evidence="1 5 6">Blocks Ras-mediated inhibition of integrin activation and modulates the ERK MAP kinase cascade. Inhibits RPS6KA3 activities by retaining it in the cytoplasm (By similarity). Inhibits both TNFRSF6- and TNFRSF1A-mediated CASP8 activity and apoptosis. Regulates glucose transport by controlling both the content of SLC2A1 glucose transporters on the plasma membrane and the insulin-dependent trafficking of SLC2A4 from the cell interior to the surface.</text>
</comment>
<comment type="subunit">
    <text evidence="1 5">Binds RPS6KA3, MAPK3 and MAPK1. Transient interaction with PLD1 and PLD2 (By similarity). Interacts with CASP8 and FADD.</text>
</comment>
<comment type="interaction">
    <interactant intactId="EBI-714410">
        <id>Q15121</id>
    </interactant>
    <interactant intactId="EBI-959949">
        <id>P28482</id>
        <label>MAPK1</label>
    </interactant>
    <organismsDiffer>false</organismsDiffer>
    <experiments>5</experiments>
</comment>
<comment type="interaction">
    <interactant intactId="EBI-714410">
        <id>Q15121</id>
    </interactant>
    <interactant intactId="EBI-73995">
        <id>P27361</id>
        <label>MAPK3</label>
    </interactant>
    <organismsDiffer>false</organismsDiffer>
    <experiments>5</experiments>
</comment>
<comment type="interaction">
    <interactant intactId="EBI-714410">
        <id>Q15121</id>
    </interactant>
    <interactant intactId="EBI-750109">
        <id>Q9NYB0</id>
        <label>TERF2IP</label>
    </interactant>
    <organismsDiffer>false</organismsDiffer>
    <experiments>2</experiments>
</comment>
<comment type="subcellular location">
    <subcellularLocation>
        <location>Cytoplasm</location>
    </subcellularLocation>
    <text>Associated with microtubules.</text>
</comment>
<comment type="alternative products">
    <event type="alternative splicing"/>
    <isoform>
        <id>Q15121-1</id>
        <name>1</name>
        <sequence type="displayed"/>
    </isoform>
    <isoform>
        <id>Q15121-2</id>
        <name>2</name>
        <sequence type="described" ref="VSP_056174"/>
    </isoform>
</comment>
<comment type="tissue specificity">
    <text evidence="6">Ubiquitously expressed. Most abundant in tissues such as heart, brain, muscle and adipose tissue which utilize glucose as an energy source. Lower expression in glucose-producing tissues. Higher levels of expression are found in tissues from individuals with type 2 diabetes than in controls.</text>
</comment>
<comment type="PTM">
    <text>Phosphorylated by protein kinase C and calcium-calmodulin-dependent protein kinase. These phosphorylation events are modulated by neurotransmitters or hormones.</text>
</comment>
<comment type="online information" name="Atlas of Genetics and Cytogenetics in Oncology and Haematology">
    <link uri="https://atlasgeneticsoncology.org/gene/46286/PEA15"/>
</comment>
<name>PEA15_HUMAN</name>
<proteinExistence type="evidence at protein level"/>
<protein>
    <recommendedName>
        <fullName>Astrocytic phosphoprotein PEA-15</fullName>
    </recommendedName>
    <alternativeName>
        <fullName>15 kDa phosphoprotein enriched in astrocytes</fullName>
    </alternativeName>
    <alternativeName>
        <fullName>Phosphoprotein enriched in diabetes</fullName>
        <shortName>PED</shortName>
    </alternativeName>
</protein>